<gene>
    <name evidence="1" type="primary">chbG</name>
    <name type="ordered locus">STY1796</name>
    <name type="ordered locus">t1196</name>
</gene>
<sequence>MERVLIVNADDFGLSKGQNYGIVEAYRNGVVTSTTALVNGEAIDHAAQLSRELPALGVGMHFVLTLGKPVSEMPGLTRDGLLGKWIWQMAEEDTLPLDEIAHELACQYQRFIDVFGREPTHLDSHHHVHMFPQIFPIVARFAAQRGIALRIDRQTVLNADDLPSDLRSTQGFSSEFYGEEITEACFLRILDASAHRGEASLEVMCHPAFVDNIIRQSAYCYPRLTELEVLTSASLKAGIAERVYRPGSFLDI</sequence>
<dbReference type="EC" id="3.5.1.105" evidence="1"/>
<dbReference type="EMBL" id="AL513382">
    <property type="protein sequence ID" value="CAD02037.1"/>
    <property type="molecule type" value="Genomic_DNA"/>
</dbReference>
<dbReference type="EMBL" id="AE014613">
    <property type="protein sequence ID" value="AAO68852.1"/>
    <property type="molecule type" value="Genomic_DNA"/>
</dbReference>
<dbReference type="RefSeq" id="NP_456195.1">
    <property type="nucleotide sequence ID" value="NC_003198.1"/>
</dbReference>
<dbReference type="RefSeq" id="WP_000442732.1">
    <property type="nucleotide sequence ID" value="NZ_WSUR01000034.1"/>
</dbReference>
<dbReference type="SMR" id="Q8Z6H0"/>
<dbReference type="STRING" id="220341.gene:17585729"/>
<dbReference type="KEGG" id="stt:t1196"/>
<dbReference type="KEGG" id="sty:STY1796"/>
<dbReference type="PATRIC" id="fig|220341.7.peg.1809"/>
<dbReference type="eggNOG" id="COG3394">
    <property type="taxonomic scope" value="Bacteria"/>
</dbReference>
<dbReference type="HOGENOM" id="CLU_064244_4_1_6"/>
<dbReference type="OMA" id="DHIDSHH"/>
<dbReference type="OrthoDB" id="9774177at2"/>
<dbReference type="UniPathway" id="UPA00349"/>
<dbReference type="Proteomes" id="UP000000541">
    <property type="component" value="Chromosome"/>
</dbReference>
<dbReference type="Proteomes" id="UP000002670">
    <property type="component" value="Chromosome"/>
</dbReference>
<dbReference type="GO" id="GO:0005737">
    <property type="term" value="C:cytoplasm"/>
    <property type="evidence" value="ECO:0007669"/>
    <property type="project" value="UniProtKB-SubCell"/>
</dbReference>
<dbReference type="GO" id="GO:0036311">
    <property type="term" value="F:chitin disaccharide deacetylase activity"/>
    <property type="evidence" value="ECO:0007669"/>
    <property type="project" value="UniProtKB-UniRule"/>
</dbReference>
<dbReference type="GO" id="GO:0019213">
    <property type="term" value="F:deacetylase activity"/>
    <property type="evidence" value="ECO:0007669"/>
    <property type="project" value="TreeGrafter"/>
</dbReference>
<dbReference type="GO" id="GO:0046872">
    <property type="term" value="F:metal ion binding"/>
    <property type="evidence" value="ECO:0007669"/>
    <property type="project" value="UniProtKB-KW"/>
</dbReference>
<dbReference type="GO" id="GO:0006032">
    <property type="term" value="P:chitin catabolic process"/>
    <property type="evidence" value="ECO:0007669"/>
    <property type="project" value="UniProtKB-UniPathway"/>
</dbReference>
<dbReference type="GO" id="GO:0052777">
    <property type="term" value="P:diacetylchitobiose catabolic process"/>
    <property type="evidence" value="ECO:0007669"/>
    <property type="project" value="UniProtKB-UniRule"/>
</dbReference>
<dbReference type="GO" id="GO:0000272">
    <property type="term" value="P:polysaccharide catabolic process"/>
    <property type="evidence" value="ECO:0007669"/>
    <property type="project" value="UniProtKB-UniRule"/>
</dbReference>
<dbReference type="CDD" id="cd10803">
    <property type="entry name" value="YdjC_EF3048_like"/>
    <property type="match status" value="1"/>
</dbReference>
<dbReference type="FunFam" id="3.20.20.370:FF:000001">
    <property type="entry name" value="Chitooligosaccharide deacetylase"/>
    <property type="match status" value="1"/>
</dbReference>
<dbReference type="Gene3D" id="3.20.20.370">
    <property type="entry name" value="Glycoside hydrolase/deacetylase"/>
    <property type="match status" value="1"/>
</dbReference>
<dbReference type="HAMAP" id="MF_01246">
    <property type="entry name" value="COD"/>
    <property type="match status" value="1"/>
</dbReference>
<dbReference type="InterPro" id="IPR022948">
    <property type="entry name" value="COD_ChbG_bac"/>
</dbReference>
<dbReference type="InterPro" id="IPR011330">
    <property type="entry name" value="Glyco_hydro/deAcase_b/a-brl"/>
</dbReference>
<dbReference type="InterPro" id="IPR006879">
    <property type="entry name" value="YdjC-like"/>
</dbReference>
<dbReference type="NCBIfam" id="NF002559">
    <property type="entry name" value="PRK02134.1"/>
    <property type="match status" value="1"/>
</dbReference>
<dbReference type="PANTHER" id="PTHR31609:SF1">
    <property type="entry name" value="CARBOHYDRATE DEACETYLASE"/>
    <property type="match status" value="1"/>
</dbReference>
<dbReference type="PANTHER" id="PTHR31609">
    <property type="entry name" value="YDJC DEACETYLASE FAMILY MEMBER"/>
    <property type="match status" value="1"/>
</dbReference>
<dbReference type="Pfam" id="PF04794">
    <property type="entry name" value="YdjC"/>
    <property type="match status" value="1"/>
</dbReference>
<dbReference type="SUPFAM" id="SSF88713">
    <property type="entry name" value="Glycoside hydrolase/deacetylase"/>
    <property type="match status" value="1"/>
</dbReference>
<protein>
    <recommendedName>
        <fullName evidence="1">Chitooligosaccharide deacetylase</fullName>
        <shortName evidence="1">COD</shortName>
        <ecNumber evidence="1">3.5.1.105</ecNumber>
    </recommendedName>
    <alternativeName>
        <fullName evidence="1">Chitin disaccharide deacetylase</fullName>
    </alternativeName>
    <alternativeName>
        <fullName evidence="1">Chitobiose deacetylase</fullName>
    </alternativeName>
    <alternativeName>
        <fullName evidence="1">Chitobiose-6P deacetylase</fullName>
    </alternativeName>
    <alternativeName>
        <fullName evidence="1">Chitotriose deacetylase</fullName>
    </alternativeName>
    <alternativeName>
        <fullName evidence="1">Chitotriose-6P deacetylase</fullName>
    </alternativeName>
</protein>
<name>CHBG_SALTI</name>
<organism>
    <name type="scientific">Salmonella typhi</name>
    <dbReference type="NCBI Taxonomy" id="90370"/>
    <lineage>
        <taxon>Bacteria</taxon>
        <taxon>Pseudomonadati</taxon>
        <taxon>Pseudomonadota</taxon>
        <taxon>Gammaproteobacteria</taxon>
        <taxon>Enterobacterales</taxon>
        <taxon>Enterobacteriaceae</taxon>
        <taxon>Salmonella</taxon>
    </lineage>
</organism>
<feature type="chain" id="PRO_0000051598" description="Chitooligosaccharide deacetylase">
    <location>
        <begin position="1"/>
        <end position="252"/>
    </location>
</feature>
<feature type="binding site" evidence="1">
    <location>
        <position position="61"/>
    </location>
    <ligand>
        <name>Mg(2+)</name>
        <dbReference type="ChEBI" id="CHEBI:18420"/>
    </ligand>
</feature>
<feature type="binding site" evidence="1">
    <location>
        <position position="125"/>
    </location>
    <ligand>
        <name>Mg(2+)</name>
        <dbReference type="ChEBI" id="CHEBI:18420"/>
    </ligand>
</feature>
<reference key="1">
    <citation type="journal article" date="2001" name="Nature">
        <title>Complete genome sequence of a multiple drug resistant Salmonella enterica serovar Typhi CT18.</title>
        <authorList>
            <person name="Parkhill J."/>
            <person name="Dougan G."/>
            <person name="James K.D."/>
            <person name="Thomson N.R."/>
            <person name="Pickard D."/>
            <person name="Wain J."/>
            <person name="Churcher C.M."/>
            <person name="Mungall K.L."/>
            <person name="Bentley S.D."/>
            <person name="Holden M.T.G."/>
            <person name="Sebaihia M."/>
            <person name="Baker S."/>
            <person name="Basham D."/>
            <person name="Brooks K."/>
            <person name="Chillingworth T."/>
            <person name="Connerton P."/>
            <person name="Cronin A."/>
            <person name="Davis P."/>
            <person name="Davies R.M."/>
            <person name="Dowd L."/>
            <person name="White N."/>
            <person name="Farrar J."/>
            <person name="Feltwell T."/>
            <person name="Hamlin N."/>
            <person name="Haque A."/>
            <person name="Hien T.T."/>
            <person name="Holroyd S."/>
            <person name="Jagels K."/>
            <person name="Krogh A."/>
            <person name="Larsen T.S."/>
            <person name="Leather S."/>
            <person name="Moule S."/>
            <person name="O'Gaora P."/>
            <person name="Parry C."/>
            <person name="Quail M.A."/>
            <person name="Rutherford K.M."/>
            <person name="Simmonds M."/>
            <person name="Skelton J."/>
            <person name="Stevens K."/>
            <person name="Whitehead S."/>
            <person name="Barrell B.G."/>
        </authorList>
    </citation>
    <scope>NUCLEOTIDE SEQUENCE [LARGE SCALE GENOMIC DNA]</scope>
    <source>
        <strain>CT18</strain>
    </source>
</reference>
<reference key="2">
    <citation type="journal article" date="2003" name="J. Bacteriol.">
        <title>Comparative genomics of Salmonella enterica serovar Typhi strains Ty2 and CT18.</title>
        <authorList>
            <person name="Deng W."/>
            <person name="Liou S.-R."/>
            <person name="Plunkett G. III"/>
            <person name="Mayhew G.F."/>
            <person name="Rose D.J."/>
            <person name="Burland V."/>
            <person name="Kodoyianni V."/>
            <person name="Schwartz D.C."/>
            <person name="Blattner F.R."/>
        </authorList>
    </citation>
    <scope>NUCLEOTIDE SEQUENCE [LARGE SCALE GENOMIC DNA]</scope>
    <source>
        <strain>ATCC 700931 / Ty2</strain>
    </source>
</reference>
<evidence type="ECO:0000255" key="1">
    <source>
        <dbReference type="HAMAP-Rule" id="MF_01246"/>
    </source>
</evidence>
<accession>Q8Z6H0</accession>
<comment type="function">
    <text evidence="1">Involved in the degradation of chitin. ChbG is essential for growth on the acetylated chitooligosaccharides chitobiose and chitotriose but is dispensable for growth on cellobiose and chitosan dimer, the deacetylated form of chitobiose. Deacetylation of chitobiose-6-P and chitotriose-6-P is necessary for both the activation of the chb promoter by the regulatory protein ChbR and the hydrolysis of phosphorylated beta-glucosides by the phospho-beta-glucosidase ChbF. Catalyzes the removal of only one acetyl group from chitobiose-6-P to yield monoacetylchitobiose-6-P, the inducer of ChbR and the substrate of ChbF.</text>
</comment>
<comment type="catalytic activity">
    <reaction evidence="1">
        <text>N,N'-diacetylchitobiose + H2O = N-acetyl-beta-D-glucosaminyl-(1-&gt;4)-D-glucosamine + acetate</text>
        <dbReference type="Rhea" id="RHEA:27469"/>
        <dbReference type="ChEBI" id="CHEBI:15377"/>
        <dbReference type="ChEBI" id="CHEBI:28681"/>
        <dbReference type="ChEBI" id="CHEBI:30089"/>
        <dbReference type="ChEBI" id="CHEBI:59910"/>
        <dbReference type="EC" id="3.5.1.105"/>
    </reaction>
</comment>
<comment type="catalytic activity">
    <reaction evidence="1">
        <text>diacetylchitobiose-6'-phosphate + H2O = N'-monoacetylchitobiose-6'-phosphate + acetate</text>
        <dbReference type="Rhea" id="RHEA:35083"/>
        <dbReference type="ChEBI" id="CHEBI:15377"/>
        <dbReference type="ChEBI" id="CHEBI:30089"/>
        <dbReference type="ChEBI" id="CHEBI:64883"/>
        <dbReference type="ChEBI" id="CHEBI:71315"/>
    </reaction>
</comment>
<comment type="cofactor">
    <cofactor evidence="1">
        <name>Mg(2+)</name>
        <dbReference type="ChEBI" id="CHEBI:18420"/>
    </cofactor>
</comment>
<comment type="pathway">
    <text evidence="1">Glycan degradation; chitin degradation.</text>
</comment>
<comment type="subunit">
    <text evidence="1">Homodimer.</text>
</comment>
<comment type="subcellular location">
    <subcellularLocation>
        <location evidence="1">Cytoplasm</location>
    </subcellularLocation>
</comment>
<comment type="similarity">
    <text evidence="1">Belongs to the YdjC deacetylase family. ChbG subfamily.</text>
</comment>
<keyword id="KW-0119">Carbohydrate metabolism</keyword>
<keyword id="KW-0146">Chitin degradation</keyword>
<keyword id="KW-0963">Cytoplasm</keyword>
<keyword id="KW-0378">Hydrolase</keyword>
<keyword id="KW-0460">Magnesium</keyword>
<keyword id="KW-0479">Metal-binding</keyword>
<keyword id="KW-0624">Polysaccharide degradation</keyword>
<proteinExistence type="inferred from homology"/>